<comment type="function">
    <text evidence="1">Component of the acetyl coenzyme A carboxylase (ACC) complex. First, biotin carboxylase catalyzes the carboxylation of biotin on its carrier protein (BCCP) and then the CO(2) group is transferred by the carboxyltransferase to acetyl-CoA to form malonyl-CoA.</text>
</comment>
<comment type="catalytic activity">
    <reaction evidence="1">
        <text>N(6)-carboxybiotinyl-L-lysyl-[protein] + acetyl-CoA = N(6)-biotinyl-L-lysyl-[protein] + malonyl-CoA</text>
        <dbReference type="Rhea" id="RHEA:54728"/>
        <dbReference type="Rhea" id="RHEA-COMP:10505"/>
        <dbReference type="Rhea" id="RHEA-COMP:10506"/>
        <dbReference type="ChEBI" id="CHEBI:57288"/>
        <dbReference type="ChEBI" id="CHEBI:57384"/>
        <dbReference type="ChEBI" id="CHEBI:83144"/>
        <dbReference type="ChEBI" id="CHEBI:83145"/>
        <dbReference type="EC" id="2.1.3.15"/>
    </reaction>
</comment>
<comment type="pathway">
    <text evidence="1">Lipid metabolism; malonyl-CoA biosynthesis; malonyl-CoA from acetyl-CoA: step 1/1.</text>
</comment>
<comment type="subunit">
    <text evidence="1">Acetyl-CoA carboxylase is a heterohexamer composed of biotin carboxyl carrier protein (AccB), biotin carboxylase (AccC) and two subunits each of ACCase subunit alpha (AccA) and ACCase subunit beta (AccD).</text>
</comment>
<comment type="subcellular location">
    <subcellularLocation>
        <location evidence="1">Cytoplasm</location>
    </subcellularLocation>
</comment>
<comment type="similarity">
    <text evidence="1">Belongs to the AccA family.</text>
</comment>
<feature type="chain" id="PRO_1000148754" description="Acetyl-coenzyme A carboxylase carboxyl transferase subunit alpha">
    <location>
        <begin position="1"/>
        <end position="255"/>
    </location>
</feature>
<feature type="domain" description="CoA carboxyltransferase C-terminal" evidence="2">
    <location>
        <begin position="1"/>
        <end position="235"/>
    </location>
</feature>
<name>ACCA_STRZJ</name>
<organism>
    <name type="scientific">Streptococcus pneumoniae (strain JJA)</name>
    <dbReference type="NCBI Taxonomy" id="488222"/>
    <lineage>
        <taxon>Bacteria</taxon>
        <taxon>Bacillati</taxon>
        <taxon>Bacillota</taxon>
        <taxon>Bacilli</taxon>
        <taxon>Lactobacillales</taxon>
        <taxon>Streptococcaceae</taxon>
        <taxon>Streptococcus</taxon>
    </lineage>
</organism>
<gene>
    <name evidence="1" type="primary">accA</name>
    <name type="ordered locus">SPJ_0413</name>
</gene>
<reference key="1">
    <citation type="journal article" date="2010" name="Genome Biol.">
        <title>Structure and dynamics of the pan-genome of Streptococcus pneumoniae and closely related species.</title>
        <authorList>
            <person name="Donati C."/>
            <person name="Hiller N.L."/>
            <person name="Tettelin H."/>
            <person name="Muzzi A."/>
            <person name="Croucher N.J."/>
            <person name="Angiuoli S.V."/>
            <person name="Oggioni M."/>
            <person name="Dunning Hotopp J.C."/>
            <person name="Hu F.Z."/>
            <person name="Riley D.R."/>
            <person name="Covacci A."/>
            <person name="Mitchell T.J."/>
            <person name="Bentley S.D."/>
            <person name="Kilian M."/>
            <person name="Ehrlich G.D."/>
            <person name="Rappuoli R."/>
            <person name="Moxon E.R."/>
            <person name="Masignani V."/>
        </authorList>
    </citation>
    <scope>NUCLEOTIDE SEQUENCE [LARGE SCALE GENOMIC DNA]</scope>
    <source>
        <strain>JJA</strain>
    </source>
</reference>
<evidence type="ECO:0000255" key="1">
    <source>
        <dbReference type="HAMAP-Rule" id="MF_00823"/>
    </source>
</evidence>
<evidence type="ECO:0000255" key="2">
    <source>
        <dbReference type="PROSITE-ProRule" id="PRU01137"/>
    </source>
</evidence>
<protein>
    <recommendedName>
        <fullName evidence="1">Acetyl-coenzyme A carboxylase carboxyl transferase subunit alpha</fullName>
        <shortName evidence="1">ACCase subunit alpha</shortName>
        <shortName evidence="1">Acetyl-CoA carboxylase carboxyltransferase subunit alpha</shortName>
        <ecNumber evidence="1">2.1.3.15</ecNumber>
    </recommendedName>
</protein>
<keyword id="KW-0067">ATP-binding</keyword>
<keyword id="KW-0963">Cytoplasm</keyword>
<keyword id="KW-0275">Fatty acid biosynthesis</keyword>
<keyword id="KW-0276">Fatty acid metabolism</keyword>
<keyword id="KW-0444">Lipid biosynthesis</keyword>
<keyword id="KW-0443">Lipid metabolism</keyword>
<keyword id="KW-0547">Nucleotide-binding</keyword>
<keyword id="KW-0808">Transferase</keyword>
<accession>C1CCJ2</accession>
<sequence>MNIAKIVREAREQSRLTTLDFATGIFDEFIQLHGDRSFRDDGAVVGGIGWLGDQAVTVVGIQKGKSLQDNLKRNFGQPHPEGYRKALRLMKQAEKFGRPVVTFINTAGAYPGVGAEERGQGEAIARNLMEMSDLKVPIIAIIIGEGGSGGALALAVADRVWMLENSIYAILSPEGFASILWKDGTRAMEAAELMKITSHELLEMDVVDKVISEVGLSSKELIKSVKKELQTELARLSQKPLEELLEERYQRFRKY</sequence>
<proteinExistence type="inferred from homology"/>
<dbReference type="EC" id="2.1.3.15" evidence="1"/>
<dbReference type="EMBL" id="CP000919">
    <property type="protein sequence ID" value="ACO20004.1"/>
    <property type="molecule type" value="Genomic_DNA"/>
</dbReference>
<dbReference type="RefSeq" id="WP_001017399.1">
    <property type="nucleotide sequence ID" value="NC_012466.1"/>
</dbReference>
<dbReference type="SMR" id="C1CCJ2"/>
<dbReference type="KEGG" id="sjj:SPJ_0413"/>
<dbReference type="HOGENOM" id="CLU_015486_0_2_9"/>
<dbReference type="UniPathway" id="UPA00655">
    <property type="reaction ID" value="UER00711"/>
</dbReference>
<dbReference type="Proteomes" id="UP000002206">
    <property type="component" value="Chromosome"/>
</dbReference>
<dbReference type="GO" id="GO:0009317">
    <property type="term" value="C:acetyl-CoA carboxylase complex"/>
    <property type="evidence" value="ECO:0007669"/>
    <property type="project" value="InterPro"/>
</dbReference>
<dbReference type="GO" id="GO:0003989">
    <property type="term" value="F:acetyl-CoA carboxylase activity"/>
    <property type="evidence" value="ECO:0007669"/>
    <property type="project" value="InterPro"/>
</dbReference>
<dbReference type="GO" id="GO:0005524">
    <property type="term" value="F:ATP binding"/>
    <property type="evidence" value="ECO:0007669"/>
    <property type="project" value="UniProtKB-KW"/>
</dbReference>
<dbReference type="GO" id="GO:0016743">
    <property type="term" value="F:carboxyl- or carbamoyltransferase activity"/>
    <property type="evidence" value="ECO:0007669"/>
    <property type="project" value="UniProtKB-UniRule"/>
</dbReference>
<dbReference type="GO" id="GO:0006633">
    <property type="term" value="P:fatty acid biosynthetic process"/>
    <property type="evidence" value="ECO:0007669"/>
    <property type="project" value="UniProtKB-KW"/>
</dbReference>
<dbReference type="GO" id="GO:2001295">
    <property type="term" value="P:malonyl-CoA biosynthetic process"/>
    <property type="evidence" value="ECO:0007669"/>
    <property type="project" value="UniProtKB-UniRule"/>
</dbReference>
<dbReference type="Gene3D" id="3.90.226.10">
    <property type="entry name" value="2-enoyl-CoA Hydratase, Chain A, domain 1"/>
    <property type="match status" value="1"/>
</dbReference>
<dbReference type="HAMAP" id="MF_00823">
    <property type="entry name" value="AcetylCoA_CT_alpha"/>
    <property type="match status" value="1"/>
</dbReference>
<dbReference type="InterPro" id="IPR001095">
    <property type="entry name" value="Acetyl_CoA_COase_a_su"/>
</dbReference>
<dbReference type="InterPro" id="IPR029045">
    <property type="entry name" value="ClpP/crotonase-like_dom_sf"/>
</dbReference>
<dbReference type="InterPro" id="IPR011763">
    <property type="entry name" value="COA_CT_C"/>
</dbReference>
<dbReference type="NCBIfam" id="TIGR00513">
    <property type="entry name" value="accA"/>
    <property type="match status" value="1"/>
</dbReference>
<dbReference type="NCBIfam" id="NF041504">
    <property type="entry name" value="AccA_sub"/>
    <property type="match status" value="1"/>
</dbReference>
<dbReference type="NCBIfam" id="NF004344">
    <property type="entry name" value="PRK05724.1"/>
    <property type="match status" value="1"/>
</dbReference>
<dbReference type="NCBIfam" id="NF008971">
    <property type="entry name" value="PRK12319.1"/>
    <property type="match status" value="1"/>
</dbReference>
<dbReference type="PANTHER" id="PTHR42853">
    <property type="entry name" value="ACETYL-COENZYME A CARBOXYLASE CARBOXYL TRANSFERASE SUBUNIT ALPHA"/>
    <property type="match status" value="1"/>
</dbReference>
<dbReference type="PANTHER" id="PTHR42853:SF3">
    <property type="entry name" value="ACETYL-COENZYME A CARBOXYLASE CARBOXYL TRANSFERASE SUBUNIT ALPHA, CHLOROPLASTIC"/>
    <property type="match status" value="1"/>
</dbReference>
<dbReference type="Pfam" id="PF03255">
    <property type="entry name" value="ACCA"/>
    <property type="match status" value="1"/>
</dbReference>
<dbReference type="PRINTS" id="PR01069">
    <property type="entry name" value="ACCCTRFRASEA"/>
</dbReference>
<dbReference type="SUPFAM" id="SSF52096">
    <property type="entry name" value="ClpP/crotonase"/>
    <property type="match status" value="1"/>
</dbReference>
<dbReference type="PROSITE" id="PS50989">
    <property type="entry name" value="COA_CT_CTER"/>
    <property type="match status" value="1"/>
</dbReference>